<evidence type="ECO:0000255" key="1">
    <source>
        <dbReference type="HAMAP-Rule" id="MF_00700"/>
    </source>
</evidence>
<evidence type="ECO:0000269" key="2">
    <source>
    </source>
</evidence>
<evidence type="ECO:0000269" key="3">
    <source>
    </source>
</evidence>
<evidence type="ECO:0000305" key="4">
    <source>
    </source>
</evidence>
<evidence type="ECO:0007829" key="5">
    <source>
        <dbReference type="PDB" id="1V33"/>
    </source>
</evidence>
<protein>
    <recommendedName>
        <fullName evidence="1">DNA primase small subunit PriS</fullName>
        <ecNumber evidence="1">2.7.7.-</ecNumber>
    </recommendedName>
    <alternativeName>
        <fullName>DNA primase 41 kDa subunit</fullName>
        <shortName>p41</shortName>
    </alternativeName>
</protein>
<keyword id="KW-0002">3D-structure</keyword>
<keyword id="KW-0235">DNA replication</keyword>
<keyword id="KW-0240">DNA-directed RNA polymerase</keyword>
<keyword id="KW-0460">Magnesium</keyword>
<keyword id="KW-0464">Manganese</keyword>
<keyword id="KW-0479">Metal-binding</keyword>
<keyword id="KW-0548">Nucleotidyltransferase</keyword>
<keyword id="KW-0639">Primosome</keyword>
<keyword id="KW-0804">Transcription</keyword>
<keyword id="KW-0808">Transferase</keyword>
<keyword id="KW-0862">Zinc</keyword>
<gene>
    <name evidence="1" type="primary">priS</name>
    <name type="synonym">priA</name>
    <name type="ordered locus">PH0195</name>
</gene>
<reference key="1">
    <citation type="journal article" date="1998" name="DNA Res.">
        <title>Complete sequence and gene organization of the genome of a hyper-thermophilic archaebacterium, Pyrococcus horikoshii OT3.</title>
        <authorList>
            <person name="Kawarabayasi Y."/>
            <person name="Sawada M."/>
            <person name="Horikawa H."/>
            <person name="Haikawa Y."/>
            <person name="Hino Y."/>
            <person name="Yamamoto S."/>
            <person name="Sekine M."/>
            <person name="Baba S."/>
            <person name="Kosugi H."/>
            <person name="Hosoyama A."/>
            <person name="Nagai Y."/>
            <person name="Sakai M."/>
            <person name="Ogura K."/>
            <person name="Otsuka R."/>
            <person name="Nakazawa H."/>
            <person name="Takamiya M."/>
            <person name="Ohfuku Y."/>
            <person name="Funahashi T."/>
            <person name="Tanaka T."/>
            <person name="Kudoh Y."/>
            <person name="Yamazaki J."/>
            <person name="Kushida N."/>
            <person name="Oguchi A."/>
            <person name="Aoki K."/>
            <person name="Yoshizawa T."/>
            <person name="Nakamura Y."/>
            <person name="Robb F.T."/>
            <person name="Horikoshi K."/>
            <person name="Masuchi Y."/>
            <person name="Shizuya H."/>
            <person name="Kikuchi H."/>
        </authorList>
    </citation>
    <scope>NUCLEOTIDE SEQUENCE [LARGE SCALE GENOMIC DNA]</scope>
    <source>
        <strain>ATCC 700860 / DSM 12428 / JCM 9974 / NBRC 100139 / OT-3</strain>
    </source>
</reference>
<reference key="2">
    <citation type="journal article" date="2007" name="FEBS J.">
        <title>Molecular basis for the subunit assembly of the primase from an archaeon Pyrococcus horikoshii.</title>
        <authorList>
            <person name="Ito N."/>
            <person name="Matsui I."/>
            <person name="Matsui E."/>
        </authorList>
    </citation>
    <scope>SUBUNIT</scope>
</reference>
<reference key="3">
    <citation type="journal article" date="2003" name="Genes Cells">
        <title>Crystal structure of the Pyrococcus horikoshii DNA primase-UTP complex: implications for the mechanism of primer synthesis.</title>
        <authorList>
            <person name="Ito N."/>
            <person name="Nureki O."/>
            <person name="Shirouzu M."/>
            <person name="Yokoyama S."/>
            <person name="Hanaoka F."/>
        </authorList>
    </citation>
    <scope>X-RAY CRYSTALLOGRAPHY (1.80 ANGSTROMS) IN COMPLEX WITH ZINC</scope>
    <scope>FUNCTION</scope>
    <scope>ACTIVE SITES</scope>
</reference>
<sequence>MLLREVTREERKNFYTNEWKVKDIPDFIVKTLELREFGFDHSGEGPSDRKNQYTDIRDLEDYIRATAPYAVYSSVALYEKPQEMEGWLGTELVFDIDAKDLPLRRCEHEPGTVCPICLNDAKEIVRDTVIILREELGFNDIHIIYSGRGYHIRVLDEWALKLDSKSRERILSFVSASEIEDVEEFRKLLLNKRGWFVLNHGYPRAFRLRFGYFILRIKLPHLINAGIRKSIAKSILKSKEEIYEEFVRKAILAAFPQGVGIESLAKLFALSTRFSKSYFDGRVTVDLKRILRLPSTLHSKVGLIAKYVGTNERDVMRFNPFKHAVPKFRKEEVKVEYKKFLESLGT</sequence>
<comment type="function">
    <text evidence="1 2">Catalytic subunit of DNA primase, an RNA polymerase that catalyzes the synthesis of short RNA molecules used as primers for DNA polymerase during DNA replication. The small subunit contains the primase catalytic core and has DNA synthesis activity on its own. Binding to the large subunit stabilizes and modulates the activity, increasing the rate of DNA synthesis while decreasing the length of the DNA fragments, and conferring RNA synthesis capability. The DNA polymerase activity may enable DNA primase to also catalyze primer extension after primer synthesis. May also play a role in DNA repair.</text>
</comment>
<comment type="cofactor">
    <cofactor evidence="1">
        <name>Mg(2+)</name>
        <dbReference type="ChEBI" id="CHEBI:18420"/>
    </cofactor>
    <cofactor evidence="1">
        <name>Mn(2+)</name>
        <dbReference type="ChEBI" id="CHEBI:29035"/>
    </cofactor>
</comment>
<comment type="subunit">
    <text evidence="1 2 3">Heterodimer of a small subunit (PriS) and a large subunit (PriL).</text>
</comment>
<comment type="miscellaneous">
    <text evidence="4">The bound zinc ion is not a cofactor. It is bound to a zinc knuckle motif that may be involved in sequence recognition and the binding of ssDNA (PubMed:14750947).</text>
</comment>
<comment type="similarity">
    <text evidence="1">Belongs to the eukaryotic-type primase small subunit family.</text>
</comment>
<dbReference type="EC" id="2.7.7.-" evidence="1"/>
<dbReference type="EMBL" id="BA000001">
    <property type="protein sequence ID" value="BAA29264.1"/>
    <property type="molecule type" value="Genomic_DNA"/>
</dbReference>
<dbReference type="PIR" id="A71242">
    <property type="entry name" value="A71242"/>
</dbReference>
<dbReference type="RefSeq" id="WP_010884304.1">
    <property type="nucleotide sequence ID" value="NC_000961.1"/>
</dbReference>
<dbReference type="PDB" id="1V33">
    <property type="method" value="X-ray"/>
    <property type="resolution" value="1.80 A"/>
    <property type="chains" value="A=1-346"/>
</dbReference>
<dbReference type="PDB" id="1V34">
    <property type="method" value="X-ray"/>
    <property type="resolution" value="2.70 A"/>
    <property type="chains" value="A=1-346"/>
</dbReference>
<dbReference type="PDBsum" id="1V33"/>
<dbReference type="PDBsum" id="1V34"/>
<dbReference type="SMR" id="O57934"/>
<dbReference type="STRING" id="70601.gene:9377105"/>
<dbReference type="EnsemblBacteria" id="BAA29264">
    <property type="protein sequence ID" value="BAA29264"/>
    <property type="gene ID" value="BAA29264"/>
</dbReference>
<dbReference type="GeneID" id="1444086"/>
<dbReference type="KEGG" id="pho:PH0195"/>
<dbReference type="eggNOG" id="arCOG04110">
    <property type="taxonomic scope" value="Archaea"/>
</dbReference>
<dbReference type="OrthoDB" id="31125at2157"/>
<dbReference type="BRENDA" id="2.7.7.B16">
    <property type="organism ID" value="5244"/>
</dbReference>
<dbReference type="EvolutionaryTrace" id="O57934"/>
<dbReference type="Proteomes" id="UP000000752">
    <property type="component" value="Chromosome"/>
</dbReference>
<dbReference type="GO" id="GO:0000428">
    <property type="term" value="C:DNA-directed RNA polymerase complex"/>
    <property type="evidence" value="ECO:0007669"/>
    <property type="project" value="UniProtKB-KW"/>
</dbReference>
<dbReference type="GO" id="GO:1990077">
    <property type="term" value="C:primosome complex"/>
    <property type="evidence" value="ECO:0007669"/>
    <property type="project" value="UniProtKB-KW"/>
</dbReference>
<dbReference type="GO" id="GO:0003899">
    <property type="term" value="F:DNA-directed RNA polymerase activity"/>
    <property type="evidence" value="ECO:0007669"/>
    <property type="project" value="InterPro"/>
</dbReference>
<dbReference type="GO" id="GO:0046872">
    <property type="term" value="F:metal ion binding"/>
    <property type="evidence" value="ECO:0007669"/>
    <property type="project" value="UniProtKB-KW"/>
</dbReference>
<dbReference type="GO" id="GO:0006269">
    <property type="term" value="P:DNA replication, synthesis of primer"/>
    <property type="evidence" value="ECO:0007669"/>
    <property type="project" value="UniProtKB-UniRule"/>
</dbReference>
<dbReference type="CDD" id="cd04860">
    <property type="entry name" value="AE_Prim_S"/>
    <property type="match status" value="1"/>
</dbReference>
<dbReference type="Gene3D" id="1.10.8.160">
    <property type="entry name" value="DNA primase S, domain 2"/>
    <property type="match status" value="1"/>
</dbReference>
<dbReference type="Gene3D" id="3.90.920.10">
    <property type="entry name" value="DNA primase, PRIM domain"/>
    <property type="match status" value="1"/>
</dbReference>
<dbReference type="HAMAP" id="MF_00700">
    <property type="entry name" value="DNA_primase_sml_arc"/>
    <property type="match status" value="1"/>
</dbReference>
<dbReference type="InterPro" id="IPR002755">
    <property type="entry name" value="DNA_primase_S"/>
</dbReference>
<dbReference type="InterPro" id="IPR014052">
    <property type="entry name" value="DNA_primase_ssu_euk/arc"/>
</dbReference>
<dbReference type="InterPro" id="IPR023639">
    <property type="entry name" value="DNA_primase_ssu_PriS"/>
</dbReference>
<dbReference type="NCBIfam" id="TIGR00335">
    <property type="entry name" value="primase_sml"/>
    <property type="match status" value="1"/>
</dbReference>
<dbReference type="PANTHER" id="PTHR10536">
    <property type="entry name" value="DNA PRIMASE SMALL SUBUNIT"/>
    <property type="match status" value="1"/>
</dbReference>
<dbReference type="Pfam" id="PF01896">
    <property type="entry name" value="DNA_primase_S"/>
    <property type="match status" value="1"/>
</dbReference>
<dbReference type="SUPFAM" id="SSF56747">
    <property type="entry name" value="Prim-pol domain"/>
    <property type="match status" value="1"/>
</dbReference>
<feature type="chain" id="PRO_0000046751" description="DNA primase small subunit PriS">
    <location>
        <begin position="1"/>
        <end position="346"/>
    </location>
</feature>
<feature type="short sequence motif" description="Zinc knuckle motif">
    <location>
        <begin position="106"/>
        <end position="117"/>
    </location>
</feature>
<feature type="active site" evidence="1 2">
    <location>
        <position position="95"/>
    </location>
</feature>
<feature type="active site" evidence="1 2">
    <location>
        <position position="97"/>
    </location>
</feature>
<feature type="active site" evidence="1 2">
    <location>
        <position position="280"/>
    </location>
</feature>
<feature type="binding site" evidence="2">
    <location>
        <position position="106"/>
    </location>
    <ligand>
        <name>Zn(2+)</name>
        <dbReference type="ChEBI" id="CHEBI:29105"/>
    </ligand>
</feature>
<feature type="binding site" evidence="2">
    <location>
        <position position="108"/>
    </location>
    <ligand>
        <name>Zn(2+)</name>
        <dbReference type="ChEBI" id="CHEBI:29105"/>
    </ligand>
</feature>
<feature type="binding site" evidence="2">
    <location>
        <position position="114"/>
    </location>
    <ligand>
        <name>Zn(2+)</name>
        <dbReference type="ChEBI" id="CHEBI:29105"/>
    </ligand>
</feature>
<feature type="binding site" evidence="2">
    <location>
        <position position="117"/>
    </location>
    <ligand>
        <name>Zn(2+)</name>
        <dbReference type="ChEBI" id="CHEBI:29105"/>
    </ligand>
</feature>
<feature type="helix" evidence="5">
    <location>
        <begin position="8"/>
        <end position="17"/>
    </location>
</feature>
<feature type="helix" evidence="5">
    <location>
        <begin position="21"/>
        <end position="23"/>
    </location>
</feature>
<feature type="helix" evidence="5">
    <location>
        <begin position="26"/>
        <end position="29"/>
    </location>
</feature>
<feature type="helix" evidence="5">
    <location>
        <begin position="30"/>
        <end position="34"/>
    </location>
</feature>
<feature type="strand" evidence="5">
    <location>
        <begin position="37"/>
        <end position="44"/>
    </location>
</feature>
<feature type="strand" evidence="5">
    <location>
        <begin position="48"/>
        <end position="51"/>
    </location>
</feature>
<feature type="helix" evidence="5">
    <location>
        <begin position="56"/>
        <end position="66"/>
    </location>
</feature>
<feature type="strand" evidence="5">
    <location>
        <begin position="69"/>
        <end position="80"/>
    </location>
</feature>
<feature type="turn" evidence="5">
    <location>
        <begin position="81"/>
        <end position="84"/>
    </location>
</feature>
<feature type="strand" evidence="5">
    <location>
        <begin position="85"/>
        <end position="90"/>
    </location>
</feature>
<feature type="strand" evidence="5">
    <location>
        <begin position="92"/>
        <end position="97"/>
    </location>
</feature>
<feature type="helix" evidence="5">
    <location>
        <begin position="98"/>
        <end position="100"/>
    </location>
</feature>
<feature type="helix" evidence="5">
    <location>
        <begin position="115"/>
        <end position="134"/>
    </location>
</feature>
<feature type="strand" evidence="5">
    <location>
        <begin position="141"/>
        <end position="145"/>
    </location>
</feature>
<feature type="strand" evidence="5">
    <location>
        <begin position="147"/>
        <end position="154"/>
    </location>
</feature>
<feature type="helix" evidence="5">
    <location>
        <begin position="157"/>
        <end position="160"/>
    </location>
</feature>
<feature type="helix" evidence="5">
    <location>
        <begin position="164"/>
        <end position="174"/>
    </location>
</feature>
<feature type="helix" evidence="5">
    <location>
        <begin position="182"/>
        <end position="191"/>
    </location>
</feature>
<feature type="helix" evidence="5">
    <location>
        <begin position="193"/>
        <end position="197"/>
    </location>
</feature>
<feature type="strand" evidence="5">
    <location>
        <begin position="199"/>
        <end position="201"/>
    </location>
</feature>
<feature type="helix" evidence="5">
    <location>
        <begin position="202"/>
        <end position="214"/>
    </location>
</feature>
<feature type="helix" evidence="5">
    <location>
        <begin position="219"/>
        <end position="224"/>
    </location>
</feature>
<feature type="helix" evidence="5">
    <location>
        <begin position="229"/>
        <end position="237"/>
    </location>
</feature>
<feature type="helix" evidence="5">
    <location>
        <begin position="239"/>
        <end position="245"/>
    </location>
</feature>
<feature type="turn" evidence="5">
    <location>
        <begin position="246"/>
        <end position="249"/>
    </location>
</feature>
<feature type="helix" evidence="5">
    <location>
        <begin position="252"/>
        <end position="254"/>
    </location>
</feature>
<feature type="helix" evidence="5">
    <location>
        <begin position="260"/>
        <end position="276"/>
    </location>
</feature>
<feature type="helix" evidence="5">
    <location>
        <begin position="281"/>
        <end position="285"/>
    </location>
</feature>
<feature type="strand" evidence="5">
    <location>
        <begin position="290"/>
        <end position="292"/>
    </location>
</feature>
<feature type="strand" evidence="5">
    <location>
        <begin position="296"/>
        <end position="298"/>
    </location>
</feature>
<feature type="turn" evidence="5">
    <location>
        <begin position="299"/>
        <end position="302"/>
    </location>
</feature>
<feature type="strand" evidence="5">
    <location>
        <begin position="307"/>
        <end position="311"/>
    </location>
</feature>
<feature type="helix" evidence="5">
    <location>
        <begin position="312"/>
        <end position="317"/>
    </location>
</feature>
<feature type="helix" evidence="5">
    <location>
        <begin position="320"/>
        <end position="323"/>
    </location>
</feature>
<feature type="helix" evidence="5">
    <location>
        <begin position="327"/>
        <end position="329"/>
    </location>
</feature>
<feature type="helix" evidence="5">
    <location>
        <begin position="330"/>
        <end position="342"/>
    </location>
</feature>
<proteinExistence type="evidence at protein level"/>
<organism>
    <name type="scientific">Pyrococcus horikoshii (strain ATCC 700860 / DSM 12428 / JCM 9974 / NBRC 100139 / OT-3)</name>
    <dbReference type="NCBI Taxonomy" id="70601"/>
    <lineage>
        <taxon>Archaea</taxon>
        <taxon>Methanobacteriati</taxon>
        <taxon>Methanobacteriota</taxon>
        <taxon>Thermococci</taxon>
        <taxon>Thermococcales</taxon>
        <taxon>Thermococcaceae</taxon>
        <taxon>Pyrococcus</taxon>
    </lineage>
</organism>
<accession>O57934</accession>
<name>PRIS_PYRHO</name>